<evidence type="ECO:0000250" key="1">
    <source>
        <dbReference type="UniProtKB" id="A0A1C9J6A7"/>
    </source>
</evidence>
<evidence type="ECO:0000250" key="2">
    <source>
        <dbReference type="UniProtKB" id="Q40577"/>
    </source>
</evidence>
<evidence type="ECO:0000255" key="3"/>
<evidence type="ECO:0000269" key="4">
    <source>
    </source>
</evidence>
<evidence type="ECO:0000303" key="5">
    <source>
    </source>
</evidence>
<evidence type="ECO:0000305" key="6"/>
<sequence>MSSLVMHVGIVNKPAITYLPTLSRRASNLHNVSSTRLQTSCSLQLDYKPVDETRRSGNYQPSAWDFEYIQSLKNKYKEEKYLTRHTKLTVQVKMLLDEDMEAVQQLDFIEDLNNLGISYLFKDKITQILNHIYNEHRCFHNNEAEESDLYFTALGFRLLRQHGFKVSQEVFDCFKNEKYTNFKASLAGDTKGLLQLYEASFLLREGEDTLELARKFSTKLLQQKIDEGEPDNNLLSCIRHSLELPLHWRLQRLEARWFLDAYATRHDMNPIIFELAKLEFNITQATQQEELKDLSRWWNSTGLAEKLPFARDRIVESYFWAMGTFEPHQYGYQRELVSKIIALTTVVDDIYDVYGTLEELELFTDVIRRWETESIDELPYYIQLCYLAVNKFVFDLAHDVLKDKGFNSLPYLKRSWKDLIERYLIEAKWYHNRYTPSLEEYLNNARVTITCPTILSQIYFALASPIEKPVIEVMYKYHDILYLSGMLLRLPDDLGTAPFELKRGDVPKAVQCYMKERNVPEKEAREHVRFLIREASKQMNTAMAIDCPFTEDFAVAAANLGRVANLAYVEGDGFGVQHSNIYEHIGSLMFKPYA</sequence>
<keyword id="KW-0150">Chloroplast</keyword>
<keyword id="KW-0456">Lyase</keyword>
<keyword id="KW-0460">Magnesium</keyword>
<keyword id="KW-0479">Metal-binding</keyword>
<keyword id="KW-0934">Plastid</keyword>
<keyword id="KW-0809">Transit peptide</keyword>
<protein>
    <recommendedName>
        <fullName evidence="5">(-)-endo-fenchol synthase, chloroplastic</fullName>
        <shortName evidence="5">Alpha fenchol synthase</shortName>
        <shortName evidence="5">LsFENS</shortName>
        <ecNumber evidence="4">4.2.3.10</ecNumber>
    </recommendedName>
    <alternativeName>
        <fullName evidence="5">Alpha pinene synthase</fullName>
        <ecNumber evidence="4">4.2.3.-</ecNumber>
    </alternativeName>
    <alternativeName>
        <fullName evidence="5">Limonene synthase</fullName>
        <ecNumber evidence="4">4.2.3.-</ecNumber>
    </alternativeName>
</protein>
<accession>T1RRJ4</accession>
<gene>
    <name evidence="5" type="primary">FENS</name>
</gene>
<dbReference type="EC" id="4.2.3.10" evidence="4"/>
<dbReference type="EC" id="4.2.3.-" evidence="4"/>
<dbReference type="EMBL" id="JX501514">
    <property type="protein sequence ID" value="AGN72801.1"/>
    <property type="molecule type" value="mRNA"/>
</dbReference>
<dbReference type="SMR" id="T1RRJ4"/>
<dbReference type="UniPathway" id="UPA00213"/>
<dbReference type="GO" id="GO:0009507">
    <property type="term" value="C:chloroplast"/>
    <property type="evidence" value="ECO:0007669"/>
    <property type="project" value="UniProtKB-SubCell"/>
</dbReference>
<dbReference type="GO" id="GO:0050437">
    <property type="term" value="F:(-)-endo-fenchol synthase activity"/>
    <property type="evidence" value="ECO:0000314"/>
    <property type="project" value="UniProtKB"/>
</dbReference>
<dbReference type="GO" id="GO:0016829">
    <property type="term" value="F:lyase activity"/>
    <property type="evidence" value="ECO:0000314"/>
    <property type="project" value="UniProtKB"/>
</dbReference>
<dbReference type="GO" id="GO:0000287">
    <property type="term" value="F:magnesium ion binding"/>
    <property type="evidence" value="ECO:0007669"/>
    <property type="project" value="InterPro"/>
</dbReference>
<dbReference type="GO" id="GO:0050550">
    <property type="term" value="F:pinene synthase activity"/>
    <property type="evidence" value="ECO:0000314"/>
    <property type="project" value="UniProtKB"/>
</dbReference>
<dbReference type="GO" id="GO:0010333">
    <property type="term" value="F:terpene synthase activity"/>
    <property type="evidence" value="ECO:0000314"/>
    <property type="project" value="UniProtKB"/>
</dbReference>
<dbReference type="GO" id="GO:0046248">
    <property type="term" value="P:alpha-pinene biosynthetic process"/>
    <property type="evidence" value="ECO:0000314"/>
    <property type="project" value="UniProtKB"/>
</dbReference>
<dbReference type="GO" id="GO:0016102">
    <property type="term" value="P:diterpenoid biosynthetic process"/>
    <property type="evidence" value="ECO:0007669"/>
    <property type="project" value="InterPro"/>
</dbReference>
<dbReference type="GO" id="GO:0010597">
    <property type="term" value="P:green leaf volatile biosynthetic process"/>
    <property type="evidence" value="ECO:0000314"/>
    <property type="project" value="UniProtKB"/>
</dbReference>
<dbReference type="GO" id="GO:0046250">
    <property type="term" value="P:limonene biosynthetic process"/>
    <property type="evidence" value="ECO:0000314"/>
    <property type="project" value="UniProtKB"/>
</dbReference>
<dbReference type="GO" id="GO:0016099">
    <property type="term" value="P:monoterpenoid biosynthetic process"/>
    <property type="evidence" value="ECO:0000314"/>
    <property type="project" value="UniProtKB"/>
</dbReference>
<dbReference type="CDD" id="cd00684">
    <property type="entry name" value="Terpene_cyclase_plant_C1"/>
    <property type="match status" value="1"/>
</dbReference>
<dbReference type="FunFam" id="1.10.600.10:FF:000007">
    <property type="entry name" value="Isoprene synthase, chloroplastic"/>
    <property type="match status" value="1"/>
</dbReference>
<dbReference type="FunFam" id="1.50.10.130:FF:000001">
    <property type="entry name" value="Isoprene synthase, chloroplastic"/>
    <property type="match status" value="1"/>
</dbReference>
<dbReference type="Gene3D" id="1.10.600.10">
    <property type="entry name" value="Farnesyl Diphosphate Synthase"/>
    <property type="match status" value="1"/>
</dbReference>
<dbReference type="Gene3D" id="1.50.10.130">
    <property type="entry name" value="Terpene synthase, N-terminal domain"/>
    <property type="match status" value="1"/>
</dbReference>
<dbReference type="InterPro" id="IPR008949">
    <property type="entry name" value="Isoprenoid_synthase_dom_sf"/>
</dbReference>
<dbReference type="InterPro" id="IPR034741">
    <property type="entry name" value="Terpene_cyclase-like_1_C"/>
</dbReference>
<dbReference type="InterPro" id="IPR044814">
    <property type="entry name" value="Terpene_cyclase_plant_C1"/>
</dbReference>
<dbReference type="InterPro" id="IPR001906">
    <property type="entry name" value="Terpene_synth_N"/>
</dbReference>
<dbReference type="InterPro" id="IPR036965">
    <property type="entry name" value="Terpene_synth_N_sf"/>
</dbReference>
<dbReference type="InterPro" id="IPR050148">
    <property type="entry name" value="Terpene_synthase-like"/>
</dbReference>
<dbReference type="InterPro" id="IPR005630">
    <property type="entry name" value="Terpene_synthase_metal-bd"/>
</dbReference>
<dbReference type="InterPro" id="IPR008930">
    <property type="entry name" value="Terpenoid_cyclase/PrenylTrfase"/>
</dbReference>
<dbReference type="PANTHER" id="PTHR31225">
    <property type="entry name" value="OS04G0344100 PROTEIN-RELATED"/>
    <property type="match status" value="1"/>
</dbReference>
<dbReference type="PANTHER" id="PTHR31225:SF9">
    <property type="entry name" value="TERPENE SYNTHASE 10"/>
    <property type="match status" value="1"/>
</dbReference>
<dbReference type="Pfam" id="PF01397">
    <property type="entry name" value="Terpene_synth"/>
    <property type="match status" value="1"/>
</dbReference>
<dbReference type="Pfam" id="PF03936">
    <property type="entry name" value="Terpene_synth_C"/>
    <property type="match status" value="1"/>
</dbReference>
<dbReference type="SFLD" id="SFLDG01019">
    <property type="entry name" value="Terpene_Cyclase_Like_1_C_Termi"/>
    <property type="match status" value="1"/>
</dbReference>
<dbReference type="SFLD" id="SFLDG01604">
    <property type="entry name" value="Terpene_Cyclase_Like_1_C_Termi"/>
    <property type="match status" value="1"/>
</dbReference>
<dbReference type="SFLD" id="SFLDG01014">
    <property type="entry name" value="Terpene_Cyclase_Like_1_N-term"/>
    <property type="match status" value="1"/>
</dbReference>
<dbReference type="SUPFAM" id="SSF48239">
    <property type="entry name" value="Terpenoid cyclases/Protein prenyltransferases"/>
    <property type="match status" value="1"/>
</dbReference>
<dbReference type="SUPFAM" id="SSF48576">
    <property type="entry name" value="Terpenoid synthases"/>
    <property type="match status" value="1"/>
</dbReference>
<comment type="function">
    <text evidence="4">Monoterpene synthase involved in the biosynthesis of volatile compounds widely used in aromatherapy and folk medicine, and present in culinary herbs (PubMed:24943828). Mediates the conversion of (2E)-geranyl diphosphate (GPP) into alpha fenchol, limonene and alpha-pinene and, as minor compounds, into beta-myrcene, alpha-terpinolene and alpha-phellandrene (PubMed:24943828).</text>
</comment>
<comment type="catalytic activity">
    <reaction evidence="4">
        <text>(2E)-geranyl diphosphate = alpha-pinene + diphosphate</text>
        <dbReference type="Rhea" id="RHEA:25662"/>
        <dbReference type="ChEBI" id="CHEBI:33019"/>
        <dbReference type="ChEBI" id="CHEBI:36740"/>
        <dbReference type="ChEBI" id="CHEBI:58057"/>
    </reaction>
    <physiologicalReaction direction="left-to-right" evidence="4">
        <dbReference type="Rhea" id="RHEA:25663"/>
    </physiologicalReaction>
</comment>
<comment type="catalytic activity">
    <reaction evidence="4">
        <text>(2E)-geranyl diphosphate + H2O = (1S,2S,4R)-endo-fenchol + diphosphate</text>
        <dbReference type="Rhea" id="RHEA:20565"/>
        <dbReference type="ChEBI" id="CHEBI:15377"/>
        <dbReference type="ChEBI" id="CHEBI:15405"/>
        <dbReference type="ChEBI" id="CHEBI:33019"/>
        <dbReference type="ChEBI" id="CHEBI:58057"/>
        <dbReference type="EC" id="4.2.3.10"/>
    </reaction>
    <physiologicalReaction direction="left-to-right" evidence="4">
        <dbReference type="Rhea" id="RHEA:20566"/>
    </physiologicalReaction>
</comment>
<comment type="catalytic activity">
    <reaction evidence="4">
        <text>(2E)-geranyl diphosphate = limonene + diphosphate</text>
        <dbReference type="Rhea" id="RHEA:68640"/>
        <dbReference type="ChEBI" id="CHEBI:15384"/>
        <dbReference type="ChEBI" id="CHEBI:33019"/>
        <dbReference type="ChEBI" id="CHEBI:58057"/>
    </reaction>
    <physiologicalReaction direction="left-to-right" evidence="4">
        <dbReference type="Rhea" id="RHEA:68641"/>
    </physiologicalReaction>
</comment>
<comment type="cofactor">
    <cofactor evidence="1">
        <name>Mg(2+)</name>
        <dbReference type="ChEBI" id="CHEBI:18420"/>
    </cofactor>
    <cofactor evidence="1">
        <name>Mn(2+)</name>
        <dbReference type="ChEBI" id="CHEBI:29035"/>
    </cofactor>
    <text evidence="1">Binds 3 Mg(2+) or Mn(2+) ions per subunit.</text>
</comment>
<comment type="pathway">
    <text evidence="4">Secondary metabolite biosynthesis; terpenoid biosynthesis.</text>
</comment>
<comment type="subcellular location">
    <subcellularLocation>
        <location evidence="3">Plastid</location>
        <location evidence="3">Chloroplast</location>
    </subcellularLocation>
</comment>
<comment type="tissue specificity">
    <text evidence="4">Expressed at low levels in leaves.</text>
</comment>
<comment type="domain">
    <text evidence="2">The Asp-Asp-Xaa-Xaa-Asp/Glu (DDXXD/E) motif is important for the catalytic activity, presumably through binding to Mg(2+).</text>
</comment>
<comment type="similarity">
    <text evidence="6">Belongs to the terpene synthase family. Tpsa subfamily.</text>
</comment>
<proteinExistence type="evidence at protein level"/>
<feature type="transit peptide" description="Chloroplast" evidence="3">
    <location>
        <begin position="1"/>
        <end position="50"/>
    </location>
</feature>
<feature type="chain" id="PRO_0000454958" description="(-)-endo-fenchol synthase, chloroplastic">
    <location>
        <begin position="51"/>
        <end position="594"/>
    </location>
</feature>
<feature type="short sequence motif" description="DDXXD motif" evidence="1">
    <location>
        <begin position="348"/>
        <end position="352"/>
    </location>
</feature>
<feature type="binding site" evidence="2">
    <location>
        <position position="348"/>
    </location>
    <ligand>
        <name>Mg(2+)</name>
        <dbReference type="ChEBI" id="CHEBI:18420"/>
        <label>1</label>
    </ligand>
</feature>
<feature type="binding site" evidence="2">
    <location>
        <position position="348"/>
    </location>
    <ligand>
        <name>Mg(2+)</name>
        <dbReference type="ChEBI" id="CHEBI:18420"/>
        <label>2</label>
    </ligand>
</feature>
<feature type="binding site" evidence="2">
    <location>
        <position position="352"/>
    </location>
    <ligand>
        <name>Mg(2+)</name>
        <dbReference type="ChEBI" id="CHEBI:18420"/>
        <label>1</label>
    </ligand>
</feature>
<feature type="binding site" evidence="2">
    <location>
        <position position="352"/>
    </location>
    <ligand>
        <name>Mg(2+)</name>
        <dbReference type="ChEBI" id="CHEBI:18420"/>
        <label>2</label>
    </ligand>
</feature>
<feature type="binding site" evidence="2">
    <location>
        <position position="492"/>
    </location>
    <ligand>
        <name>Mg(2+)</name>
        <dbReference type="ChEBI" id="CHEBI:18420"/>
        <label>3</label>
    </ligand>
</feature>
<feature type="binding site" evidence="2">
    <location>
        <position position="500"/>
    </location>
    <ligand>
        <name>Mg(2+)</name>
        <dbReference type="ChEBI" id="CHEBI:18420"/>
        <label>3</label>
    </ligand>
</feature>
<name>FENS_LAVST</name>
<reference key="1">
    <citation type="journal article" date="2015" name="Physiol. Plantarum">
        <title>Functional characterization of terpene synthases and chemotypic variation in three lavender species of section Stoechas.</title>
        <authorList>
            <person name="Benabdelkader T."/>
            <person name="Guitton Y."/>
            <person name="Pasquier B."/>
            <person name="Magnard J.L."/>
            <person name="Jullien F."/>
            <person name="Kameli A."/>
            <person name="Legendre L."/>
        </authorList>
    </citation>
    <scope>NUCLEOTIDE SEQUENCE [MRNA]</scope>
    <scope>FUNCTION</scope>
    <scope>CATALYTIC ACTIVITY</scope>
    <scope>PATHWAY</scope>
    <scope>TISSUE SPECIFICITY</scope>
    <source>
        <tissue>Leaf</tissue>
    </source>
</reference>
<organism>
    <name type="scientific">Lavandula stoechas</name>
    <name type="common">Butterfly lavender</name>
    <dbReference type="NCBI Taxonomy" id="39333"/>
    <lineage>
        <taxon>Eukaryota</taxon>
        <taxon>Viridiplantae</taxon>
        <taxon>Streptophyta</taxon>
        <taxon>Embryophyta</taxon>
        <taxon>Tracheophyta</taxon>
        <taxon>Spermatophyta</taxon>
        <taxon>Magnoliopsida</taxon>
        <taxon>eudicotyledons</taxon>
        <taxon>Gunneridae</taxon>
        <taxon>Pentapetalae</taxon>
        <taxon>asterids</taxon>
        <taxon>lamiids</taxon>
        <taxon>Lamiales</taxon>
        <taxon>Lamiaceae</taxon>
        <taxon>Nepetoideae</taxon>
        <taxon>Ocimeae</taxon>
        <taxon>Lavandulinae</taxon>
        <taxon>Lavandula</taxon>
    </lineage>
</organism>